<proteinExistence type="inferred from homology"/>
<gene>
    <name evidence="1" type="primary">atpE</name>
    <name type="ordered locus">M164_1564</name>
</gene>
<organism>
    <name type="scientific">Saccharolobus islandicus (strain M.16.4 / Kamchatka #3)</name>
    <name type="common">Sulfolobus islandicus</name>
    <dbReference type="NCBI Taxonomy" id="426118"/>
    <lineage>
        <taxon>Archaea</taxon>
        <taxon>Thermoproteota</taxon>
        <taxon>Thermoprotei</taxon>
        <taxon>Sulfolobales</taxon>
        <taxon>Sulfolobaceae</taxon>
        <taxon>Saccharolobus</taxon>
    </lineage>
</organism>
<evidence type="ECO:0000255" key="1">
    <source>
        <dbReference type="HAMAP-Rule" id="MF_00311"/>
    </source>
</evidence>
<comment type="function">
    <text evidence="1">Component of the A-type ATP synthase that produces ATP from ADP in the presence of a proton gradient across the membrane.</text>
</comment>
<comment type="subunit">
    <text evidence="1">Has multiple subunits with at least A(3), B(3), C, D, E, F, H, I and proteolipid K(x).</text>
</comment>
<comment type="subcellular location">
    <subcellularLocation>
        <location evidence="1">Cell membrane</location>
        <topology evidence="1">Peripheral membrane protein</topology>
    </subcellularLocation>
</comment>
<comment type="similarity">
    <text evidence="1">Belongs to the V-ATPase E subunit family.</text>
</comment>
<dbReference type="EMBL" id="CP001402">
    <property type="protein sequence ID" value="ACR42165.1"/>
    <property type="molecule type" value="Genomic_DNA"/>
</dbReference>
<dbReference type="RefSeq" id="WP_012711560.1">
    <property type="nucleotide sequence ID" value="NC_012726.1"/>
</dbReference>
<dbReference type="SMR" id="C4KHV1"/>
<dbReference type="KEGG" id="sid:M164_1564"/>
<dbReference type="HOGENOM" id="CLU_1412391_0_0_2"/>
<dbReference type="Proteomes" id="UP000001479">
    <property type="component" value="Chromosome"/>
</dbReference>
<dbReference type="GO" id="GO:0005886">
    <property type="term" value="C:plasma membrane"/>
    <property type="evidence" value="ECO:0007669"/>
    <property type="project" value="UniProtKB-SubCell"/>
</dbReference>
<dbReference type="GO" id="GO:0033178">
    <property type="term" value="C:proton-transporting two-sector ATPase complex, catalytic domain"/>
    <property type="evidence" value="ECO:0007669"/>
    <property type="project" value="InterPro"/>
</dbReference>
<dbReference type="GO" id="GO:0005524">
    <property type="term" value="F:ATP binding"/>
    <property type="evidence" value="ECO:0007669"/>
    <property type="project" value="UniProtKB-UniRule"/>
</dbReference>
<dbReference type="GO" id="GO:0046933">
    <property type="term" value="F:proton-transporting ATP synthase activity, rotational mechanism"/>
    <property type="evidence" value="ECO:0007669"/>
    <property type="project" value="UniProtKB-UniRule"/>
</dbReference>
<dbReference type="GO" id="GO:0046961">
    <property type="term" value="F:proton-transporting ATPase activity, rotational mechanism"/>
    <property type="evidence" value="ECO:0007669"/>
    <property type="project" value="InterPro"/>
</dbReference>
<dbReference type="GO" id="GO:0042777">
    <property type="term" value="P:proton motive force-driven plasma membrane ATP synthesis"/>
    <property type="evidence" value="ECO:0007669"/>
    <property type="project" value="UniProtKB-UniRule"/>
</dbReference>
<dbReference type="Gene3D" id="3.30.2320.30">
    <property type="entry name" value="ATP synthase, E subunit, C-terminal"/>
    <property type="match status" value="1"/>
</dbReference>
<dbReference type="HAMAP" id="MF_00311">
    <property type="entry name" value="ATP_synth_E_arch"/>
    <property type="match status" value="1"/>
</dbReference>
<dbReference type="InterPro" id="IPR038495">
    <property type="entry name" value="ATPase_E_C"/>
</dbReference>
<dbReference type="InterPro" id="IPR002842">
    <property type="entry name" value="ATPase_V1_Esu"/>
</dbReference>
<dbReference type="Pfam" id="PF01991">
    <property type="entry name" value="vATP-synt_E"/>
    <property type="match status" value="1"/>
</dbReference>
<dbReference type="SUPFAM" id="SSF160527">
    <property type="entry name" value="V-type ATPase subunit E-like"/>
    <property type="match status" value="1"/>
</dbReference>
<protein>
    <recommendedName>
        <fullName evidence="1">A-type ATP synthase subunit E</fullName>
    </recommendedName>
</protein>
<accession>C4KHV1</accession>
<reference key="1">
    <citation type="journal article" date="2009" name="Proc. Natl. Acad. Sci. U.S.A.">
        <title>Biogeography of the Sulfolobus islandicus pan-genome.</title>
        <authorList>
            <person name="Reno M.L."/>
            <person name="Held N.L."/>
            <person name="Fields C.J."/>
            <person name="Burke P.V."/>
            <person name="Whitaker R.J."/>
        </authorList>
    </citation>
    <scope>NUCLEOTIDE SEQUENCE [LARGE SCALE GENOMIC DNA]</scope>
    <source>
        <strain>M.16.4 / Kamchatka #3</strain>
    </source>
</reference>
<keyword id="KW-0066">ATP synthesis</keyword>
<keyword id="KW-1003">Cell membrane</keyword>
<keyword id="KW-0375">Hydrogen ion transport</keyword>
<keyword id="KW-0406">Ion transport</keyword>
<keyword id="KW-0472">Membrane</keyword>
<keyword id="KW-0813">Transport</keyword>
<feature type="chain" id="PRO_1000205052" description="A-type ATP synthase subunit E">
    <location>
        <begin position="1"/>
        <end position="194"/>
    </location>
</feature>
<name>AATE_SACI6</name>
<sequence>MDFEQLLDKSLNKVREEIKTELSKSLDEAIKLLNEGHTKIIQEYTQRINELITKTKEEIEGEKARLEVENKRTLLVEKEYWINKVYERVLEKIGEVVKTKEYKDAIQSILNKEIKEMEGEKITVYCSPNDKSTVEKVVGNNKNVTIKTDDKMLGGIRIYYEGSGLTRDFSLKLILDQVFDSMRGKISDMLFGGK</sequence>